<geneLocation type="mitochondrion"/>
<gene>
    <name type="primary">COX2</name>
    <name evidence="4" type="ordered locus">CM_00030W</name>
    <name type="ORF">CaalfMp01</name>
</gene>
<reference key="1">
    <citation type="journal article" date="2001" name="J. Bacteriol.">
        <title>Infrequent genetic exchange and recombination in the mitochondrial genome of Candida albicans.</title>
        <authorList>
            <person name="Anderson J.B."/>
            <person name="Wickens C."/>
            <person name="Khan M."/>
            <person name="Cowen L.E."/>
            <person name="Federspiel N.A."/>
            <person name="Jones T."/>
            <person name="Kohn L.M."/>
        </authorList>
    </citation>
    <scope>NUCLEOTIDE SEQUENCE [LARGE SCALE GENOMIC DNA]</scope>
    <source>
        <strain>SC5314 / ATCC MYA-2876</strain>
    </source>
</reference>
<comment type="function">
    <text evidence="1">Component of the cytochrome c oxidase, the last enzyme in the mitochondrial electron transport chain which drives oxidative phosphorylation. The respiratory chain contains 3 multisubunit complexes succinate dehydrogenase (complex II, CII), ubiquinol-cytochrome c oxidoreductase (cytochrome b-c1 complex, complex III, CIII) and cytochrome c oxidase (complex IV, CIV), that cooperate to transfer electrons derived from NADH and succinate to molecular oxygen, creating an electrochemical gradient over the inner membrane that drives transmembrane transport and the ATP synthase. Cytochrome c oxidase is the component of the respiratory chain that catalyzes the reduction of oxygen to water. Electrons originating from reduced cytochrome c in the intermembrane space (IMS) are transferred via the dinuclear copper A center (CU(A)) of subunit 2 and heme A of subunit 1 to the active site in subunit 1, a binuclear center (BNC) formed by heme A3 and copper B (CU(B)). The BNC reduces molecular oxygen to 2 water molecules using 4 electrons from cytochrome c in the IMS and 4 protons from the mitochondrial matrix.</text>
</comment>
<comment type="catalytic activity">
    <reaction evidence="1">
        <text>4 Fe(II)-[cytochrome c] + O2 + 8 H(+)(in) = 4 Fe(III)-[cytochrome c] + 2 H2O + 4 H(+)(out)</text>
        <dbReference type="Rhea" id="RHEA:11436"/>
        <dbReference type="Rhea" id="RHEA-COMP:10350"/>
        <dbReference type="Rhea" id="RHEA-COMP:14399"/>
        <dbReference type="ChEBI" id="CHEBI:15377"/>
        <dbReference type="ChEBI" id="CHEBI:15378"/>
        <dbReference type="ChEBI" id="CHEBI:15379"/>
        <dbReference type="ChEBI" id="CHEBI:29033"/>
        <dbReference type="ChEBI" id="CHEBI:29034"/>
        <dbReference type="EC" id="7.1.1.9"/>
    </reaction>
    <physiologicalReaction direction="left-to-right" evidence="1">
        <dbReference type="Rhea" id="RHEA:11437"/>
    </physiologicalReaction>
</comment>
<comment type="cofactor">
    <cofactor evidence="1">
        <name>Cu cation</name>
        <dbReference type="ChEBI" id="CHEBI:23378"/>
    </cofactor>
    <text evidence="1">Binds a dinuclear copper A center per subunit.</text>
</comment>
<comment type="subunit">
    <text evidence="1">Component of the cytochrome c oxidase (complex IV, CIV), a multisubunit enzyme composed of a catalytic core of 3 subunits and several supernumerary subunits. The complex exists as a monomer or a dimer and forms supercomplexes (SCs) in the inner mitochondrial membrane with ubiquinol-cytochrome c oxidoreductase (cytochrome b-c1 complex, complex III, CIII).</text>
</comment>
<comment type="subcellular location">
    <subcellularLocation>
        <location evidence="1">Mitochondrion inner membrane</location>
        <topology evidence="1">Multi-pass membrane protein</topology>
    </subcellularLocation>
</comment>
<comment type="similarity">
    <text evidence="3">Belongs to the cytochrome c oxidase subunit 2 family.</text>
</comment>
<organism>
    <name type="scientific">Candida albicans (strain SC5314 / ATCC MYA-2876)</name>
    <name type="common">Yeast</name>
    <dbReference type="NCBI Taxonomy" id="237561"/>
    <lineage>
        <taxon>Eukaryota</taxon>
        <taxon>Fungi</taxon>
        <taxon>Dikarya</taxon>
        <taxon>Ascomycota</taxon>
        <taxon>Saccharomycotina</taxon>
        <taxon>Pichiomycetes</taxon>
        <taxon>Debaryomycetaceae</taxon>
        <taxon>Candida/Lodderomyces clade</taxon>
        <taxon>Candida</taxon>
    </lineage>
</organism>
<protein>
    <recommendedName>
        <fullName>Cytochrome c oxidase subunit 2</fullName>
        <ecNumber>7.1.1.9</ecNumber>
    </recommendedName>
    <alternativeName>
        <fullName>Cytochrome c oxidase polypeptide II</fullName>
    </alternativeName>
</protein>
<feature type="chain" id="PRO_0000356868" description="Cytochrome c oxidase subunit 2">
    <location>
        <begin position="1"/>
        <end position="262"/>
    </location>
</feature>
<feature type="transmembrane region" description="Helical" evidence="2">
    <location>
        <begin position="31"/>
        <end position="51"/>
    </location>
</feature>
<feature type="transmembrane region" description="Helical" evidence="2">
    <location>
        <begin position="72"/>
        <end position="92"/>
    </location>
</feature>
<feature type="binding site" evidence="1">
    <location>
        <position position="175"/>
    </location>
    <ligand>
        <name>Cu cation</name>
        <dbReference type="ChEBI" id="CHEBI:23378"/>
        <label>A1</label>
    </ligand>
</feature>
<feature type="binding site" evidence="1">
    <location>
        <position position="210"/>
    </location>
    <ligand>
        <name>Cu cation</name>
        <dbReference type="ChEBI" id="CHEBI:23378"/>
        <label>A1</label>
    </ligand>
</feature>
<feature type="binding site" evidence="1">
    <location>
        <position position="210"/>
    </location>
    <ligand>
        <name>Cu cation</name>
        <dbReference type="ChEBI" id="CHEBI:23378"/>
        <label>A2</label>
    </ligand>
</feature>
<feature type="binding site" evidence="1">
    <location>
        <position position="212"/>
    </location>
    <ligand>
        <name>Cu cation</name>
        <dbReference type="ChEBI" id="CHEBI:23378"/>
        <label>A2</label>
    </ligand>
</feature>
<feature type="binding site" evidence="1">
    <location>
        <position position="212"/>
    </location>
    <ligand>
        <name>Mg(2+)</name>
        <dbReference type="ChEBI" id="CHEBI:18420"/>
        <note>ligand shared with subunit 1</note>
    </ligand>
</feature>
<feature type="binding site" evidence="1">
    <location>
        <position position="214"/>
    </location>
    <ligand>
        <name>Cu cation</name>
        <dbReference type="ChEBI" id="CHEBI:23378"/>
        <label>A1</label>
    </ligand>
</feature>
<feature type="binding site" evidence="1">
    <location>
        <position position="214"/>
    </location>
    <ligand>
        <name>Cu cation</name>
        <dbReference type="ChEBI" id="CHEBI:23378"/>
        <label>A2</label>
    </ligand>
</feature>
<feature type="binding site" evidence="1">
    <location>
        <position position="218"/>
    </location>
    <ligand>
        <name>Cu cation</name>
        <dbReference type="ChEBI" id="CHEBI:23378"/>
        <label>A2</label>
    </ligand>
</feature>
<feature type="binding site" evidence="1">
    <location>
        <position position="221"/>
    </location>
    <ligand>
        <name>Cu cation</name>
        <dbReference type="ChEBI" id="CHEBI:23378"/>
        <label>A1</label>
    </ligand>
</feature>
<keyword id="KW-0186">Copper</keyword>
<keyword id="KW-0249">Electron transport</keyword>
<keyword id="KW-0460">Magnesium</keyword>
<keyword id="KW-0472">Membrane</keyword>
<keyword id="KW-0479">Metal-binding</keyword>
<keyword id="KW-0496">Mitochondrion</keyword>
<keyword id="KW-0999">Mitochondrion inner membrane</keyword>
<keyword id="KW-1185">Reference proteome</keyword>
<keyword id="KW-0679">Respiratory chain</keyword>
<keyword id="KW-1278">Translocase</keyword>
<keyword id="KW-0812">Transmembrane</keyword>
<keyword id="KW-1133">Transmembrane helix</keyword>
<keyword id="KW-0813">Transport</keyword>
<accession>Q9B8D8</accession>
<proteinExistence type="inferred from homology"/>
<name>COX2_CANAL</name>
<dbReference type="EC" id="7.1.1.9"/>
<dbReference type="EMBL" id="AF285261">
    <property type="protein sequence ID" value="AAG59600.2"/>
    <property type="molecule type" value="Genomic_DNA"/>
</dbReference>
<dbReference type="RefSeq" id="NP_075030.2">
    <property type="nucleotide sequence ID" value="NC_002653.1"/>
</dbReference>
<dbReference type="SMR" id="Q9B8D8"/>
<dbReference type="FunCoup" id="Q9B8D8">
    <property type="interactions" value="233"/>
</dbReference>
<dbReference type="STRING" id="237561.Q9B8D8"/>
<dbReference type="EnsemblFungi" id="CM_00030W-T">
    <property type="protein sequence ID" value="CM_00030W-T-p1"/>
    <property type="gene ID" value="CM_00030W"/>
</dbReference>
<dbReference type="GeneID" id="802565"/>
<dbReference type="KEGG" id="cal:CaalfMp01"/>
<dbReference type="CGD" id="CAL0000186073">
    <property type="gene designation" value="COX2"/>
</dbReference>
<dbReference type="VEuPathDB" id="FungiDB:CM_00030W"/>
<dbReference type="InParanoid" id="Q9B8D8"/>
<dbReference type="Proteomes" id="UP000000559">
    <property type="component" value="Mitochondrion"/>
</dbReference>
<dbReference type="GO" id="GO:0005743">
    <property type="term" value="C:mitochondrial inner membrane"/>
    <property type="evidence" value="ECO:0007669"/>
    <property type="project" value="UniProtKB-SubCell"/>
</dbReference>
<dbReference type="GO" id="GO:0045277">
    <property type="term" value="C:respiratory chain complex IV"/>
    <property type="evidence" value="ECO:0000250"/>
    <property type="project" value="CGD"/>
</dbReference>
<dbReference type="GO" id="GO:0005507">
    <property type="term" value="F:copper ion binding"/>
    <property type="evidence" value="ECO:0007669"/>
    <property type="project" value="InterPro"/>
</dbReference>
<dbReference type="GO" id="GO:0004129">
    <property type="term" value="F:cytochrome-c oxidase activity"/>
    <property type="evidence" value="ECO:0000250"/>
    <property type="project" value="CGD"/>
</dbReference>
<dbReference type="GO" id="GO:0042773">
    <property type="term" value="P:ATP synthesis coupled electron transport"/>
    <property type="evidence" value="ECO:0000318"/>
    <property type="project" value="GO_Central"/>
</dbReference>
<dbReference type="GO" id="GO:0006123">
    <property type="term" value="P:mitochondrial electron transport, cytochrome c to oxygen"/>
    <property type="evidence" value="ECO:0000250"/>
    <property type="project" value="CGD"/>
</dbReference>
<dbReference type="CDD" id="cd13912">
    <property type="entry name" value="CcO_II_C"/>
    <property type="match status" value="1"/>
</dbReference>
<dbReference type="FunFam" id="1.10.287.90:FF:000004">
    <property type="entry name" value="Cytochrome c oxidase subunit 2"/>
    <property type="match status" value="1"/>
</dbReference>
<dbReference type="FunFam" id="2.60.40.420:FF:000001">
    <property type="entry name" value="Cytochrome c oxidase subunit 2"/>
    <property type="match status" value="1"/>
</dbReference>
<dbReference type="Gene3D" id="1.10.287.90">
    <property type="match status" value="1"/>
</dbReference>
<dbReference type="Gene3D" id="2.60.40.420">
    <property type="entry name" value="Cupredoxins - blue copper proteins"/>
    <property type="match status" value="1"/>
</dbReference>
<dbReference type="InterPro" id="IPR045187">
    <property type="entry name" value="CcO_II"/>
</dbReference>
<dbReference type="InterPro" id="IPR002429">
    <property type="entry name" value="CcO_II-like_C"/>
</dbReference>
<dbReference type="InterPro" id="IPR034210">
    <property type="entry name" value="CcO_II_C"/>
</dbReference>
<dbReference type="InterPro" id="IPR001505">
    <property type="entry name" value="Copper_CuA"/>
</dbReference>
<dbReference type="InterPro" id="IPR008972">
    <property type="entry name" value="Cupredoxin"/>
</dbReference>
<dbReference type="InterPro" id="IPR014222">
    <property type="entry name" value="Cyt_c_oxidase_su2"/>
</dbReference>
<dbReference type="InterPro" id="IPR011759">
    <property type="entry name" value="Cyt_c_oxidase_su2_TM_dom"/>
</dbReference>
<dbReference type="InterPro" id="IPR036257">
    <property type="entry name" value="Cyt_c_oxidase_su2_TM_sf"/>
</dbReference>
<dbReference type="NCBIfam" id="TIGR02866">
    <property type="entry name" value="CoxB"/>
    <property type="match status" value="1"/>
</dbReference>
<dbReference type="PANTHER" id="PTHR22888:SF9">
    <property type="entry name" value="CYTOCHROME C OXIDASE SUBUNIT 2"/>
    <property type="match status" value="1"/>
</dbReference>
<dbReference type="PANTHER" id="PTHR22888">
    <property type="entry name" value="CYTOCHROME C OXIDASE, SUBUNIT II"/>
    <property type="match status" value="1"/>
</dbReference>
<dbReference type="Pfam" id="PF00116">
    <property type="entry name" value="COX2"/>
    <property type="match status" value="1"/>
</dbReference>
<dbReference type="Pfam" id="PF02790">
    <property type="entry name" value="COX2_TM"/>
    <property type="match status" value="1"/>
</dbReference>
<dbReference type="PRINTS" id="PR01166">
    <property type="entry name" value="CYCOXIDASEII"/>
</dbReference>
<dbReference type="SUPFAM" id="SSF49503">
    <property type="entry name" value="Cupredoxins"/>
    <property type="match status" value="1"/>
</dbReference>
<dbReference type="SUPFAM" id="SSF81464">
    <property type="entry name" value="Cytochrome c oxidase subunit II-like, transmembrane region"/>
    <property type="match status" value="1"/>
</dbReference>
<dbReference type="PROSITE" id="PS00078">
    <property type="entry name" value="COX2"/>
    <property type="match status" value="1"/>
</dbReference>
<dbReference type="PROSITE" id="PS50857">
    <property type="entry name" value="COX2_CUA"/>
    <property type="match status" value="1"/>
</dbReference>
<dbReference type="PROSITE" id="PS50999">
    <property type="entry name" value="COX2_TM"/>
    <property type="match status" value="1"/>
</dbReference>
<sequence length="262" mass="29859">MIRLDVPTPWGIRLQDSATPNAEGIHELYDHIMFYLCLILGLVSYILYVIIKDYKDNRFAYKYVRHGQVIEIIWTIFPAVILLLIAFPSFILLYLCDEVLTPAMTIKVIGLQWYWKYEYSDFVDSIGETIEFESYVIPDDMLEPGALRLLDTDTSIVVPVDTHIRFVVTANDVIHSFTIPSLGMKIDATPGRLNQVSALIQRTGVYYGQCSELCGVNHGMMPIKLECVSIEDFIEWLGENEVSLNSSMVEQCTVNALILVQF</sequence>
<evidence type="ECO:0000250" key="1">
    <source>
        <dbReference type="UniProtKB" id="P00410"/>
    </source>
</evidence>
<evidence type="ECO:0000255" key="2"/>
<evidence type="ECO:0000305" key="3"/>
<evidence type="ECO:0000312" key="4">
    <source>
        <dbReference type="CGD" id="CAL0000186073"/>
    </source>
</evidence>